<gene>
    <name type="primary">guaA</name>
    <name type="ordered locus">Cj1248</name>
</gene>
<keyword id="KW-0067">ATP-binding</keyword>
<keyword id="KW-0315">Glutamine amidotransferase</keyword>
<keyword id="KW-0332">GMP biosynthesis</keyword>
<keyword id="KW-0436">Ligase</keyword>
<keyword id="KW-0547">Nucleotide-binding</keyword>
<keyword id="KW-0658">Purine biosynthesis</keyword>
<keyword id="KW-1185">Reference proteome</keyword>
<dbReference type="EC" id="6.3.5.2"/>
<dbReference type="EMBL" id="AL111168">
    <property type="protein sequence ID" value="CAL35363.1"/>
    <property type="molecule type" value="Genomic_DNA"/>
</dbReference>
<dbReference type="PIR" id="B81332">
    <property type="entry name" value="B81332"/>
</dbReference>
<dbReference type="RefSeq" id="WP_002853189.1">
    <property type="nucleotide sequence ID" value="NZ_SZUC01000001.1"/>
</dbReference>
<dbReference type="RefSeq" id="YP_002344639.1">
    <property type="nucleotide sequence ID" value="NC_002163.1"/>
</dbReference>
<dbReference type="SMR" id="Q9PN49"/>
<dbReference type="IntAct" id="Q9PN49">
    <property type="interactions" value="1"/>
</dbReference>
<dbReference type="STRING" id="192222.Cj1248"/>
<dbReference type="MEROPS" id="C26.957"/>
<dbReference type="PaxDb" id="192222-Cj1248"/>
<dbReference type="EnsemblBacteria" id="CAL35363">
    <property type="protein sequence ID" value="CAL35363"/>
    <property type="gene ID" value="Cj1248"/>
</dbReference>
<dbReference type="GeneID" id="905539"/>
<dbReference type="KEGG" id="cje:Cj1248"/>
<dbReference type="PATRIC" id="fig|192222.6.peg.1231"/>
<dbReference type="eggNOG" id="COG0518">
    <property type="taxonomic scope" value="Bacteria"/>
</dbReference>
<dbReference type="eggNOG" id="COG0519">
    <property type="taxonomic scope" value="Bacteria"/>
</dbReference>
<dbReference type="HOGENOM" id="CLU_014340_0_5_7"/>
<dbReference type="OrthoDB" id="9802219at2"/>
<dbReference type="UniPathway" id="UPA00189">
    <property type="reaction ID" value="UER00296"/>
</dbReference>
<dbReference type="Proteomes" id="UP000000799">
    <property type="component" value="Chromosome"/>
</dbReference>
<dbReference type="GO" id="GO:0005829">
    <property type="term" value="C:cytosol"/>
    <property type="evidence" value="ECO:0007669"/>
    <property type="project" value="TreeGrafter"/>
</dbReference>
<dbReference type="GO" id="GO:0005524">
    <property type="term" value="F:ATP binding"/>
    <property type="evidence" value="ECO:0007669"/>
    <property type="project" value="UniProtKB-UniRule"/>
</dbReference>
<dbReference type="GO" id="GO:0003921">
    <property type="term" value="F:GMP synthase activity"/>
    <property type="evidence" value="ECO:0007669"/>
    <property type="project" value="InterPro"/>
</dbReference>
<dbReference type="CDD" id="cd01742">
    <property type="entry name" value="GATase1_GMP_Synthase"/>
    <property type="match status" value="1"/>
</dbReference>
<dbReference type="CDD" id="cd01997">
    <property type="entry name" value="GMP_synthase_C"/>
    <property type="match status" value="1"/>
</dbReference>
<dbReference type="FunFam" id="3.30.300.10:FF:000002">
    <property type="entry name" value="GMP synthase [glutamine-hydrolyzing]"/>
    <property type="match status" value="1"/>
</dbReference>
<dbReference type="FunFam" id="3.40.50.620:FF:000001">
    <property type="entry name" value="GMP synthase [glutamine-hydrolyzing]"/>
    <property type="match status" value="1"/>
</dbReference>
<dbReference type="FunFam" id="3.40.50.880:FF:000001">
    <property type="entry name" value="GMP synthase [glutamine-hydrolyzing]"/>
    <property type="match status" value="1"/>
</dbReference>
<dbReference type="Gene3D" id="3.30.300.10">
    <property type="match status" value="1"/>
</dbReference>
<dbReference type="Gene3D" id="3.40.50.880">
    <property type="match status" value="1"/>
</dbReference>
<dbReference type="Gene3D" id="3.40.50.620">
    <property type="entry name" value="HUPs"/>
    <property type="match status" value="1"/>
</dbReference>
<dbReference type="HAMAP" id="MF_00344">
    <property type="entry name" value="GMP_synthase"/>
    <property type="match status" value="1"/>
</dbReference>
<dbReference type="InterPro" id="IPR029062">
    <property type="entry name" value="Class_I_gatase-like"/>
</dbReference>
<dbReference type="InterPro" id="IPR017926">
    <property type="entry name" value="GATASE"/>
</dbReference>
<dbReference type="InterPro" id="IPR001674">
    <property type="entry name" value="GMP_synth_C"/>
</dbReference>
<dbReference type="InterPro" id="IPR004739">
    <property type="entry name" value="GMP_synth_GATase"/>
</dbReference>
<dbReference type="InterPro" id="IPR022955">
    <property type="entry name" value="GMP_synthase"/>
</dbReference>
<dbReference type="InterPro" id="IPR025777">
    <property type="entry name" value="GMPS_ATP_PPase_dom"/>
</dbReference>
<dbReference type="InterPro" id="IPR022310">
    <property type="entry name" value="NAD/GMP_synthase"/>
</dbReference>
<dbReference type="InterPro" id="IPR014729">
    <property type="entry name" value="Rossmann-like_a/b/a_fold"/>
</dbReference>
<dbReference type="NCBIfam" id="TIGR00884">
    <property type="entry name" value="guaA_Cterm"/>
    <property type="match status" value="1"/>
</dbReference>
<dbReference type="NCBIfam" id="TIGR00888">
    <property type="entry name" value="guaA_Nterm"/>
    <property type="match status" value="1"/>
</dbReference>
<dbReference type="NCBIfam" id="NF000848">
    <property type="entry name" value="PRK00074.1"/>
    <property type="match status" value="1"/>
</dbReference>
<dbReference type="PANTHER" id="PTHR11922:SF2">
    <property type="entry name" value="GMP SYNTHASE [GLUTAMINE-HYDROLYZING]"/>
    <property type="match status" value="1"/>
</dbReference>
<dbReference type="PANTHER" id="PTHR11922">
    <property type="entry name" value="GMP SYNTHASE-RELATED"/>
    <property type="match status" value="1"/>
</dbReference>
<dbReference type="Pfam" id="PF00117">
    <property type="entry name" value="GATase"/>
    <property type="match status" value="1"/>
</dbReference>
<dbReference type="Pfam" id="PF00958">
    <property type="entry name" value="GMP_synt_C"/>
    <property type="match status" value="1"/>
</dbReference>
<dbReference type="Pfam" id="PF02540">
    <property type="entry name" value="NAD_synthase"/>
    <property type="match status" value="1"/>
</dbReference>
<dbReference type="PRINTS" id="PR00097">
    <property type="entry name" value="ANTSNTHASEII"/>
</dbReference>
<dbReference type="PRINTS" id="PR00096">
    <property type="entry name" value="GATASE"/>
</dbReference>
<dbReference type="SUPFAM" id="SSF52402">
    <property type="entry name" value="Adenine nucleotide alpha hydrolases-like"/>
    <property type="match status" value="1"/>
</dbReference>
<dbReference type="SUPFAM" id="SSF52317">
    <property type="entry name" value="Class I glutamine amidotransferase-like"/>
    <property type="match status" value="1"/>
</dbReference>
<dbReference type="SUPFAM" id="SSF54810">
    <property type="entry name" value="GMP synthetase C-terminal dimerisation domain"/>
    <property type="match status" value="1"/>
</dbReference>
<dbReference type="PROSITE" id="PS51273">
    <property type="entry name" value="GATASE_TYPE_1"/>
    <property type="match status" value="1"/>
</dbReference>
<dbReference type="PROSITE" id="PS51553">
    <property type="entry name" value="GMPS_ATP_PPASE"/>
    <property type="match status" value="1"/>
</dbReference>
<reference key="1">
    <citation type="journal article" date="2000" name="Nature">
        <title>The genome sequence of the food-borne pathogen Campylobacter jejuni reveals hypervariable sequences.</title>
        <authorList>
            <person name="Parkhill J."/>
            <person name="Wren B.W."/>
            <person name="Mungall K.L."/>
            <person name="Ketley J.M."/>
            <person name="Churcher C.M."/>
            <person name="Basham D."/>
            <person name="Chillingworth T."/>
            <person name="Davies R.M."/>
            <person name="Feltwell T."/>
            <person name="Holroyd S."/>
            <person name="Jagels K."/>
            <person name="Karlyshev A.V."/>
            <person name="Moule S."/>
            <person name="Pallen M.J."/>
            <person name="Penn C.W."/>
            <person name="Quail M.A."/>
            <person name="Rajandream M.A."/>
            <person name="Rutherford K.M."/>
            <person name="van Vliet A.H.M."/>
            <person name="Whitehead S."/>
            <person name="Barrell B.G."/>
        </authorList>
    </citation>
    <scope>NUCLEOTIDE SEQUENCE [LARGE SCALE GENOMIC DNA]</scope>
    <source>
        <strain>ATCC 700819 / NCTC 11168</strain>
    </source>
</reference>
<feature type="chain" id="PRO_0000140105" description="GMP synthase [glutamine-hydrolyzing]">
    <location>
        <begin position="1"/>
        <end position="511"/>
    </location>
</feature>
<feature type="domain" description="Glutamine amidotransferase type-1">
    <location>
        <begin position="5"/>
        <end position="195"/>
    </location>
</feature>
<feature type="domain" description="GMPS ATP-PPase">
    <location>
        <begin position="196"/>
        <end position="386"/>
    </location>
</feature>
<feature type="active site" description="Nucleophile" evidence="1">
    <location>
        <position position="82"/>
    </location>
</feature>
<feature type="active site" evidence="1">
    <location>
        <position position="169"/>
    </location>
</feature>
<feature type="active site" evidence="1">
    <location>
        <position position="171"/>
    </location>
</feature>
<feature type="binding site" evidence="1">
    <location>
        <begin position="223"/>
        <end position="229"/>
    </location>
    <ligand>
        <name>ATP</name>
        <dbReference type="ChEBI" id="CHEBI:30616"/>
    </ligand>
</feature>
<organism>
    <name type="scientific">Campylobacter jejuni subsp. jejuni serotype O:2 (strain ATCC 700819 / NCTC 11168)</name>
    <dbReference type="NCBI Taxonomy" id="192222"/>
    <lineage>
        <taxon>Bacteria</taxon>
        <taxon>Pseudomonadati</taxon>
        <taxon>Campylobacterota</taxon>
        <taxon>Epsilonproteobacteria</taxon>
        <taxon>Campylobacterales</taxon>
        <taxon>Campylobacteraceae</taxon>
        <taxon>Campylobacter</taxon>
    </lineage>
</organism>
<proteinExistence type="inferred from homology"/>
<accession>Q9PN49</accession>
<accession>Q0P908</accession>
<name>GUAA_CAMJE</name>
<protein>
    <recommendedName>
        <fullName>GMP synthase [glutamine-hydrolyzing]</fullName>
        <ecNumber>6.3.5.2</ecNumber>
    </recommendedName>
    <alternativeName>
        <fullName>GMP synthetase</fullName>
    </alternativeName>
    <alternativeName>
        <fullName>Glutamine amidotransferase</fullName>
    </alternativeName>
</protein>
<comment type="function">
    <text evidence="1">Catalyzes the synthesis of GMP from XMP.</text>
</comment>
<comment type="catalytic activity">
    <reaction>
        <text>XMP + L-glutamine + ATP + H2O = GMP + L-glutamate + AMP + diphosphate + 2 H(+)</text>
        <dbReference type="Rhea" id="RHEA:11680"/>
        <dbReference type="ChEBI" id="CHEBI:15377"/>
        <dbReference type="ChEBI" id="CHEBI:15378"/>
        <dbReference type="ChEBI" id="CHEBI:29985"/>
        <dbReference type="ChEBI" id="CHEBI:30616"/>
        <dbReference type="ChEBI" id="CHEBI:33019"/>
        <dbReference type="ChEBI" id="CHEBI:57464"/>
        <dbReference type="ChEBI" id="CHEBI:58115"/>
        <dbReference type="ChEBI" id="CHEBI:58359"/>
        <dbReference type="ChEBI" id="CHEBI:456215"/>
        <dbReference type="EC" id="6.3.5.2"/>
    </reaction>
</comment>
<comment type="pathway">
    <text>Purine metabolism; GMP biosynthesis; GMP from XMP (L-Gln route): step 1/1.</text>
</comment>
<comment type="subunit">
    <text evidence="1">Homodimer.</text>
</comment>
<sequence>MKKADILVLDFGSQYTQLIARRLREQGVYAEILPFNVSLADIKAKEPKGIILSGGPASVYATDAYFCDKGIFDLNLPVLGICYGMQLMAHHYKATVAPAGHKEYGKANIEIKKDNALFKNLPKKQTVWMSHSDKVENLPQGFEVLATSENSPFCVFGNEDKKFFALQFHPEVQHSEFGKNILKNFAKYACNCESIWNMGSFAKTQAEKIREEVGNDKVLCAVSGGVDSSVVAALLASAIKEQIIVVFVDNGLLRSGEKEQVEFMFKNTLGIDLISIDASEIFLSRLVNVTDPEQKRKIIGNTFIEVFEEEAKKHKDVKYLAQGTLYTDIIESSVVGASKTIKSHHNVGGLPEKMNLKLIEPLKEIFKDEVRALGLELGLSKEVVYRHPFPGPGLAIRIMGEVNRASLELLRKADVILLEELKSTGWYDKTWQAFCVLLNVKSVGVMGDNRTYDNAVCIRVVDASDGMTATFSHLPYEILENISRRIINEVEGINRVVYDISSKPPATIEWE</sequence>
<evidence type="ECO:0000250" key="1"/>